<keyword id="KW-0963">Cytoplasm</keyword>
<keyword id="KW-0448">Lipopolysaccharide biosynthesis</keyword>
<keyword id="KW-1185">Reference proteome</keyword>
<keyword id="KW-0808">Transferase</keyword>
<reference key="1">
    <citation type="journal article" date="2001" name="Science">
        <title>The genome of the natural genetic engineer Agrobacterium tumefaciens C58.</title>
        <authorList>
            <person name="Wood D.W."/>
            <person name="Setubal J.C."/>
            <person name="Kaul R."/>
            <person name="Monks D.E."/>
            <person name="Kitajima J.P."/>
            <person name="Okura V.K."/>
            <person name="Zhou Y."/>
            <person name="Chen L."/>
            <person name="Wood G.E."/>
            <person name="Almeida N.F. Jr."/>
            <person name="Woo L."/>
            <person name="Chen Y."/>
            <person name="Paulsen I.T."/>
            <person name="Eisen J.A."/>
            <person name="Karp P.D."/>
            <person name="Bovee D. Sr."/>
            <person name="Chapman P."/>
            <person name="Clendenning J."/>
            <person name="Deatherage G."/>
            <person name="Gillet W."/>
            <person name="Grant C."/>
            <person name="Kutyavin T."/>
            <person name="Levy R."/>
            <person name="Li M.-J."/>
            <person name="McClelland E."/>
            <person name="Palmieri A."/>
            <person name="Raymond C."/>
            <person name="Rouse G."/>
            <person name="Saenphimmachak C."/>
            <person name="Wu Z."/>
            <person name="Romero P."/>
            <person name="Gordon D."/>
            <person name="Zhang S."/>
            <person name="Yoo H."/>
            <person name="Tao Y."/>
            <person name="Biddle P."/>
            <person name="Jung M."/>
            <person name="Krespan W."/>
            <person name="Perry M."/>
            <person name="Gordon-Kamm B."/>
            <person name="Liao L."/>
            <person name="Kim S."/>
            <person name="Hendrick C."/>
            <person name="Zhao Z.-Y."/>
            <person name="Dolan M."/>
            <person name="Chumley F."/>
            <person name="Tingey S.V."/>
            <person name="Tomb J.-F."/>
            <person name="Gordon M.P."/>
            <person name="Olson M.V."/>
            <person name="Nester E.W."/>
        </authorList>
    </citation>
    <scope>NUCLEOTIDE SEQUENCE [LARGE SCALE GENOMIC DNA]</scope>
    <source>
        <strain>C58 / ATCC 33970</strain>
    </source>
</reference>
<reference key="2">
    <citation type="journal article" date="2001" name="Science">
        <title>Genome sequence of the plant pathogen and biotechnology agent Agrobacterium tumefaciens C58.</title>
        <authorList>
            <person name="Goodner B."/>
            <person name="Hinkle G."/>
            <person name="Gattung S."/>
            <person name="Miller N."/>
            <person name="Blanchard M."/>
            <person name="Qurollo B."/>
            <person name="Goldman B.S."/>
            <person name="Cao Y."/>
            <person name="Askenazi M."/>
            <person name="Halling C."/>
            <person name="Mullin L."/>
            <person name="Houmiel K."/>
            <person name="Gordon J."/>
            <person name="Vaudin M."/>
            <person name="Iartchouk O."/>
            <person name="Epp A."/>
            <person name="Liu F."/>
            <person name="Wollam C."/>
            <person name="Allinger M."/>
            <person name="Doughty D."/>
            <person name="Scott C."/>
            <person name="Lappas C."/>
            <person name="Markelz B."/>
            <person name="Flanagan C."/>
            <person name="Crowell C."/>
            <person name="Gurson J."/>
            <person name="Lomo C."/>
            <person name="Sear C."/>
            <person name="Strub G."/>
            <person name="Cielo C."/>
            <person name="Slater S."/>
        </authorList>
    </citation>
    <scope>NUCLEOTIDE SEQUENCE [LARGE SCALE GENOMIC DNA]</scope>
    <source>
        <strain>C58 / ATCC 33970</strain>
    </source>
</reference>
<feature type="chain" id="PRO_0000187098" description="2-dehydro-3-deoxyphosphooctonate aldolase">
    <location>
        <begin position="1"/>
        <end position="282"/>
    </location>
</feature>
<proteinExistence type="inferred from homology"/>
<gene>
    <name evidence="1" type="primary">kdsA</name>
    <name type="ordered locus">Atu1424</name>
    <name type="ORF">AGR_C_2628</name>
</gene>
<accession>Q8UFH3</accession>
<evidence type="ECO:0000255" key="1">
    <source>
        <dbReference type="HAMAP-Rule" id="MF_00056"/>
    </source>
</evidence>
<evidence type="ECO:0000305" key="2"/>
<organism>
    <name type="scientific">Agrobacterium fabrum (strain C58 / ATCC 33970)</name>
    <name type="common">Agrobacterium tumefaciens (strain C58)</name>
    <dbReference type="NCBI Taxonomy" id="176299"/>
    <lineage>
        <taxon>Bacteria</taxon>
        <taxon>Pseudomonadati</taxon>
        <taxon>Pseudomonadota</taxon>
        <taxon>Alphaproteobacteria</taxon>
        <taxon>Hyphomicrobiales</taxon>
        <taxon>Rhizobiaceae</taxon>
        <taxon>Rhizobium/Agrobacterium group</taxon>
        <taxon>Agrobacterium</taxon>
        <taxon>Agrobacterium tumefaciens complex</taxon>
    </lineage>
</organism>
<dbReference type="EC" id="2.5.1.55" evidence="1"/>
<dbReference type="EMBL" id="AE007869">
    <property type="protein sequence ID" value="AAK87217.2"/>
    <property type="status" value="ALT_INIT"/>
    <property type="molecule type" value="Genomic_DNA"/>
</dbReference>
<dbReference type="PIR" id="AH2751">
    <property type="entry name" value="AH2751"/>
</dbReference>
<dbReference type="PIR" id="H97532">
    <property type="entry name" value="H97532"/>
</dbReference>
<dbReference type="RefSeq" id="NP_354432.2">
    <property type="nucleotide sequence ID" value="NC_003062.2"/>
</dbReference>
<dbReference type="RefSeq" id="WP_010971614.1">
    <property type="nucleotide sequence ID" value="NC_003062.2"/>
</dbReference>
<dbReference type="SMR" id="Q8UFH3"/>
<dbReference type="STRING" id="176299.Atu1424"/>
<dbReference type="EnsemblBacteria" id="AAK87217">
    <property type="protein sequence ID" value="AAK87217"/>
    <property type="gene ID" value="Atu1424"/>
</dbReference>
<dbReference type="GeneID" id="1133462"/>
<dbReference type="KEGG" id="atu:Atu1424"/>
<dbReference type="PATRIC" id="fig|176299.10.peg.1447"/>
<dbReference type="eggNOG" id="COG2877">
    <property type="taxonomic scope" value="Bacteria"/>
</dbReference>
<dbReference type="HOGENOM" id="CLU_036666_0_0_5"/>
<dbReference type="OrthoDB" id="9776934at2"/>
<dbReference type="UniPathway" id="UPA00030"/>
<dbReference type="UniPathway" id="UPA00357">
    <property type="reaction ID" value="UER00474"/>
</dbReference>
<dbReference type="Proteomes" id="UP000000813">
    <property type="component" value="Chromosome circular"/>
</dbReference>
<dbReference type="GO" id="GO:0005737">
    <property type="term" value="C:cytoplasm"/>
    <property type="evidence" value="ECO:0007669"/>
    <property type="project" value="UniProtKB-SubCell"/>
</dbReference>
<dbReference type="GO" id="GO:0008676">
    <property type="term" value="F:3-deoxy-8-phosphooctulonate synthase activity"/>
    <property type="evidence" value="ECO:0007669"/>
    <property type="project" value="UniProtKB-UniRule"/>
</dbReference>
<dbReference type="GO" id="GO:0019294">
    <property type="term" value="P:keto-3-deoxy-D-manno-octulosonic acid biosynthetic process"/>
    <property type="evidence" value="ECO:0007669"/>
    <property type="project" value="UniProtKB-UniRule"/>
</dbReference>
<dbReference type="Gene3D" id="3.20.20.70">
    <property type="entry name" value="Aldolase class I"/>
    <property type="match status" value="1"/>
</dbReference>
<dbReference type="HAMAP" id="MF_00056">
    <property type="entry name" value="KDO8P_synth"/>
    <property type="match status" value="1"/>
</dbReference>
<dbReference type="InterPro" id="IPR013785">
    <property type="entry name" value="Aldolase_TIM"/>
</dbReference>
<dbReference type="InterPro" id="IPR006218">
    <property type="entry name" value="DAHP1/KDSA"/>
</dbReference>
<dbReference type="InterPro" id="IPR006269">
    <property type="entry name" value="KDO8P_synthase"/>
</dbReference>
<dbReference type="NCBIfam" id="TIGR01362">
    <property type="entry name" value="KDO8P_synth"/>
    <property type="match status" value="1"/>
</dbReference>
<dbReference type="NCBIfam" id="NF003543">
    <property type="entry name" value="PRK05198.1"/>
    <property type="match status" value="1"/>
</dbReference>
<dbReference type="PANTHER" id="PTHR21057">
    <property type="entry name" value="PHOSPHO-2-DEHYDRO-3-DEOXYHEPTONATE ALDOLASE"/>
    <property type="match status" value="1"/>
</dbReference>
<dbReference type="Pfam" id="PF00793">
    <property type="entry name" value="DAHP_synth_1"/>
    <property type="match status" value="1"/>
</dbReference>
<dbReference type="SUPFAM" id="SSF51569">
    <property type="entry name" value="Aldolase"/>
    <property type="match status" value="1"/>
</dbReference>
<comment type="catalytic activity">
    <reaction evidence="1">
        <text>D-arabinose 5-phosphate + phosphoenolpyruvate + H2O = 3-deoxy-alpha-D-manno-2-octulosonate-8-phosphate + phosphate</text>
        <dbReference type="Rhea" id="RHEA:14053"/>
        <dbReference type="ChEBI" id="CHEBI:15377"/>
        <dbReference type="ChEBI" id="CHEBI:43474"/>
        <dbReference type="ChEBI" id="CHEBI:57693"/>
        <dbReference type="ChEBI" id="CHEBI:58702"/>
        <dbReference type="ChEBI" id="CHEBI:85985"/>
        <dbReference type="EC" id="2.5.1.55"/>
    </reaction>
</comment>
<comment type="pathway">
    <text evidence="1">Carbohydrate biosynthesis; 3-deoxy-D-manno-octulosonate biosynthesis; 3-deoxy-D-manno-octulosonate from D-ribulose 5-phosphate: step 2/3.</text>
</comment>
<comment type="pathway">
    <text evidence="1">Bacterial outer membrane biogenesis; lipopolysaccharide biosynthesis.</text>
</comment>
<comment type="subcellular location">
    <subcellularLocation>
        <location evidence="1">Cytoplasm</location>
    </subcellularLocation>
</comment>
<comment type="similarity">
    <text evidence="1">Belongs to the KdsA family.</text>
</comment>
<comment type="sequence caution" evidence="2">
    <conflict type="erroneous initiation">
        <sequence resource="EMBL-CDS" id="AAK87217"/>
    </conflict>
</comment>
<protein>
    <recommendedName>
        <fullName evidence="1">2-dehydro-3-deoxyphosphooctonate aldolase</fullName>
        <ecNumber evidence="1">2.5.1.55</ecNumber>
    </recommendedName>
    <alternativeName>
        <fullName evidence="1">3-deoxy-D-manno-octulosonic acid 8-phosphate synthase</fullName>
    </alternativeName>
    <alternativeName>
        <fullName evidence="1">KDO-8-phosphate synthase</fullName>
        <shortName evidence="1">KDO 8-P synthase</shortName>
        <shortName evidence="1">KDOPS</shortName>
    </alternativeName>
    <alternativeName>
        <fullName evidence="1">Phospho-2-dehydro-3-deoxyoctonate aldolase</fullName>
    </alternativeName>
</protein>
<name>KDSA_AGRFC</name>
<sequence>MMSVTNNLKVTAGDGASKVSFCNTERFSLIAGPCQMESRDHAFMIAGVLKELCDSLGIGLVYKSSFDKANRTSLSGKRGIGLDSAMEIFADLKKEFGFPVLSDIHTEEQCAIVSEVVDVLQIPAFLSRQTDLLVAAAKTGRVINVKKGQFLAPWDMKNVLAKLNESGNPNVLLCERGASFGYNTLVSDMRSLPIMASLGAPVIFDATHSVQQPGGQGGSTGGQREFVETLARAAVAVGVAGLFIETHEDPDNAPSDGPNMVHLKDMPKLLEKLLAFDAITKA</sequence>